<keyword id="KW-0002">3D-structure</keyword>
<keyword id="KW-0007">Acetylation</keyword>
<keyword id="KW-0131">Cell cycle</keyword>
<keyword id="KW-0132">Cell division</keyword>
<keyword id="KW-0137">Centromere</keyword>
<keyword id="KW-0158">Chromosome</keyword>
<keyword id="KW-0963">Cytoplasm</keyword>
<keyword id="KW-0995">Kinetochore</keyword>
<keyword id="KW-0498">Mitosis</keyword>
<keyword id="KW-0539">Nucleus</keyword>
<keyword id="KW-1267">Proteomics identification</keyword>
<keyword id="KW-1185">Reference proteome</keyword>
<keyword id="KW-0833">Ubl conjugation pathway</keyword>
<name>APC16_HUMAN</name>
<evidence type="ECO:0000256" key="1">
    <source>
        <dbReference type="SAM" id="MobiDB-lite"/>
    </source>
</evidence>
<evidence type="ECO:0000269" key="2">
    <source>
    </source>
</evidence>
<evidence type="ECO:0000269" key="3">
    <source>
    </source>
</evidence>
<evidence type="ECO:0000269" key="4">
    <source>
    </source>
</evidence>
<evidence type="ECO:0000269" key="5">
    <source>
    </source>
</evidence>
<evidence type="ECO:0000269" key="6">
    <source>
    </source>
</evidence>
<evidence type="ECO:0000303" key="7">
    <source>
    </source>
</evidence>
<evidence type="ECO:0000305" key="8"/>
<evidence type="ECO:0007744" key="9">
    <source>
        <dbReference type="PDB" id="4UI9"/>
    </source>
</evidence>
<evidence type="ECO:0007744" key="10">
    <source>
        <dbReference type="PDB" id="5A31"/>
    </source>
</evidence>
<evidence type="ECO:0007744" key="11">
    <source>
    </source>
</evidence>
<evidence type="ECO:0007829" key="12">
    <source>
        <dbReference type="PDB" id="9GAW"/>
    </source>
</evidence>
<feature type="initiator methionine" description="Removed" evidence="11">
    <location>
        <position position="1"/>
    </location>
</feature>
<feature type="chain" id="PRO_0000089816" description="Anaphase-promoting complex subunit 16">
    <location>
        <begin position="2"/>
        <end position="110"/>
    </location>
</feature>
<feature type="region of interest" description="Disordered" evidence="1">
    <location>
        <begin position="1"/>
        <end position="29"/>
    </location>
</feature>
<feature type="compositionally biased region" description="Low complexity" evidence="1">
    <location>
        <begin position="1"/>
        <end position="26"/>
    </location>
</feature>
<feature type="modified residue" description="N-acetylalanine" evidence="11">
    <location>
        <position position="2"/>
    </location>
</feature>
<feature type="helix" evidence="12">
    <location>
        <begin position="52"/>
        <end position="83"/>
    </location>
</feature>
<feature type="helix" evidence="12">
    <location>
        <begin position="84"/>
        <end position="86"/>
    </location>
</feature>
<feature type="helix" evidence="12">
    <location>
        <begin position="87"/>
        <end position="91"/>
    </location>
</feature>
<feature type="helix" evidence="12">
    <location>
        <begin position="93"/>
        <end position="95"/>
    </location>
</feature>
<feature type="helix" evidence="12">
    <location>
        <begin position="99"/>
        <end position="102"/>
    </location>
</feature>
<reference key="1">
    <citation type="journal article" date="2004" name="Nature">
        <title>The DNA sequence and comparative analysis of human chromosome 10.</title>
        <authorList>
            <person name="Deloukas P."/>
            <person name="Earthrowl M.E."/>
            <person name="Grafham D.V."/>
            <person name="Rubenfield M."/>
            <person name="French L."/>
            <person name="Steward C.A."/>
            <person name="Sims S.K."/>
            <person name="Jones M.C."/>
            <person name="Searle S."/>
            <person name="Scott C."/>
            <person name="Howe K."/>
            <person name="Hunt S.E."/>
            <person name="Andrews T.D."/>
            <person name="Gilbert J.G.R."/>
            <person name="Swarbreck D."/>
            <person name="Ashurst J.L."/>
            <person name="Taylor A."/>
            <person name="Battles J."/>
            <person name="Bird C.P."/>
            <person name="Ainscough R."/>
            <person name="Almeida J.P."/>
            <person name="Ashwell R.I.S."/>
            <person name="Ambrose K.D."/>
            <person name="Babbage A.K."/>
            <person name="Bagguley C.L."/>
            <person name="Bailey J."/>
            <person name="Banerjee R."/>
            <person name="Bates K."/>
            <person name="Beasley H."/>
            <person name="Bray-Allen S."/>
            <person name="Brown A.J."/>
            <person name="Brown J.Y."/>
            <person name="Burford D.C."/>
            <person name="Burrill W."/>
            <person name="Burton J."/>
            <person name="Cahill P."/>
            <person name="Camire D."/>
            <person name="Carter N.P."/>
            <person name="Chapman J.C."/>
            <person name="Clark S.Y."/>
            <person name="Clarke G."/>
            <person name="Clee C.M."/>
            <person name="Clegg S."/>
            <person name="Corby N."/>
            <person name="Coulson A."/>
            <person name="Dhami P."/>
            <person name="Dutta I."/>
            <person name="Dunn M."/>
            <person name="Faulkner L."/>
            <person name="Frankish A."/>
            <person name="Frankland J.A."/>
            <person name="Garner P."/>
            <person name="Garnett J."/>
            <person name="Gribble S."/>
            <person name="Griffiths C."/>
            <person name="Grocock R."/>
            <person name="Gustafson E."/>
            <person name="Hammond S."/>
            <person name="Harley J.L."/>
            <person name="Hart E."/>
            <person name="Heath P.D."/>
            <person name="Ho T.P."/>
            <person name="Hopkins B."/>
            <person name="Horne J."/>
            <person name="Howden P.J."/>
            <person name="Huckle E."/>
            <person name="Hynds C."/>
            <person name="Johnson C."/>
            <person name="Johnson D."/>
            <person name="Kana A."/>
            <person name="Kay M."/>
            <person name="Kimberley A.M."/>
            <person name="Kershaw J.K."/>
            <person name="Kokkinaki M."/>
            <person name="Laird G.K."/>
            <person name="Lawlor S."/>
            <person name="Lee H.M."/>
            <person name="Leongamornlert D.A."/>
            <person name="Laird G."/>
            <person name="Lloyd C."/>
            <person name="Lloyd D.M."/>
            <person name="Loveland J."/>
            <person name="Lovell J."/>
            <person name="McLaren S."/>
            <person name="McLay K.E."/>
            <person name="McMurray A."/>
            <person name="Mashreghi-Mohammadi M."/>
            <person name="Matthews L."/>
            <person name="Milne S."/>
            <person name="Nickerson T."/>
            <person name="Nguyen M."/>
            <person name="Overton-Larty E."/>
            <person name="Palmer S.A."/>
            <person name="Pearce A.V."/>
            <person name="Peck A.I."/>
            <person name="Pelan S."/>
            <person name="Phillimore B."/>
            <person name="Porter K."/>
            <person name="Rice C.M."/>
            <person name="Rogosin A."/>
            <person name="Ross M.T."/>
            <person name="Sarafidou T."/>
            <person name="Sehra H.K."/>
            <person name="Shownkeen R."/>
            <person name="Skuce C.D."/>
            <person name="Smith M."/>
            <person name="Standring L."/>
            <person name="Sycamore N."/>
            <person name="Tester J."/>
            <person name="Thorpe A."/>
            <person name="Torcasso W."/>
            <person name="Tracey A."/>
            <person name="Tromans A."/>
            <person name="Tsolas J."/>
            <person name="Wall M."/>
            <person name="Walsh J."/>
            <person name="Wang H."/>
            <person name="Weinstock K."/>
            <person name="West A.P."/>
            <person name="Willey D.L."/>
            <person name="Whitehead S.L."/>
            <person name="Wilming L."/>
            <person name="Wray P.W."/>
            <person name="Young L."/>
            <person name="Chen Y."/>
            <person name="Lovering R.C."/>
            <person name="Moschonas N.K."/>
            <person name="Siebert R."/>
            <person name="Fechtel K."/>
            <person name="Bentley D."/>
            <person name="Durbin R.M."/>
            <person name="Hubbard T."/>
            <person name="Doucette-Stamm L."/>
            <person name="Beck S."/>
            <person name="Smith D.R."/>
            <person name="Rogers J."/>
        </authorList>
    </citation>
    <scope>NUCLEOTIDE SEQUENCE [LARGE SCALE GENOMIC DNA]</scope>
</reference>
<reference key="2">
    <citation type="journal article" date="2004" name="Genome Res.">
        <title>The status, quality, and expansion of the NIH full-length cDNA project: the Mammalian Gene Collection (MGC).</title>
        <authorList>
            <consortium name="The MGC Project Team"/>
        </authorList>
    </citation>
    <scope>NUCLEOTIDE SEQUENCE [LARGE SCALE MRNA]</scope>
    <source>
        <tissue>Lung</tissue>
    </source>
</reference>
<reference key="3">
    <citation type="journal article" date="2010" name="Cell">
        <title>The protein composition of mitotic chromosomes determined using multiclassifier combinatorial proteomics.</title>
        <authorList>
            <person name="Ohta S."/>
            <person name="Bukowski-Wills J.C."/>
            <person name="Sanchez-Pulido L."/>
            <person name="Alves Fde L."/>
            <person name="Wood L."/>
            <person name="Chen Z.A."/>
            <person name="Platani M."/>
            <person name="Fischer L."/>
            <person name="Hudson D.F."/>
            <person name="Ponting C.P."/>
            <person name="Fukagawa T."/>
            <person name="Earnshaw W.C."/>
            <person name="Rappsilber J."/>
        </authorList>
    </citation>
    <scope>SUBCELLULAR LOCATION</scope>
</reference>
<reference key="4">
    <citation type="journal article" date="2010" name="Science">
        <title>Systematic analysis of human protein complexes identifies chromosome segregation proteins.</title>
        <authorList>
            <person name="Hutchins J.R."/>
            <person name="Toyoda Y."/>
            <person name="Hegemann B."/>
            <person name="Poser I."/>
            <person name="Heriche J.K."/>
            <person name="Sykora M.M."/>
            <person name="Augsburg M."/>
            <person name="Hudecz O."/>
            <person name="Buschhorn B.A."/>
            <person name="Bulkescher J."/>
            <person name="Conrad C."/>
            <person name="Comartin D."/>
            <person name="Schleiffer A."/>
            <person name="Sarov M."/>
            <person name="Pozniakovsky A."/>
            <person name="Slabicki M.M."/>
            <person name="Schloissnig S."/>
            <person name="Steinmacher I."/>
            <person name="Leuschner M."/>
            <person name="Ssykor A."/>
            <person name="Lawo S."/>
            <person name="Pelletier L."/>
            <person name="Stark H."/>
            <person name="Nasmyth K."/>
            <person name="Ellenberg J."/>
            <person name="Durbin R."/>
            <person name="Buchholz F."/>
            <person name="Mechtler K."/>
            <person name="Hyman A.A."/>
            <person name="Peters J.M."/>
        </authorList>
    </citation>
    <scope>FUNCTION</scope>
    <scope>SUBUNIT</scope>
    <scope>IDENTIFICATION BY MASS SPECTROMETRY</scope>
    <scope>SUBCELLULAR LOCATION</scope>
</reference>
<reference key="5">
    <citation type="journal article" date="2011" name="BMC Syst. Biol.">
        <title>Initial characterization of the human central proteome.</title>
        <authorList>
            <person name="Burkard T.R."/>
            <person name="Planyavsky M."/>
            <person name="Kaupe I."/>
            <person name="Breitwieser F.P."/>
            <person name="Buerckstuemmer T."/>
            <person name="Bennett K.L."/>
            <person name="Superti-Furga G."/>
            <person name="Colinge J."/>
        </authorList>
    </citation>
    <scope>IDENTIFICATION BY MASS SPECTROMETRY [LARGE SCALE ANALYSIS]</scope>
</reference>
<reference key="6">
    <citation type="journal article" date="2012" name="Proc. Natl. Acad. Sci. U.S.A.">
        <title>N-terminal acetylome analyses and functional insights of the N-terminal acetyltransferase NatB.</title>
        <authorList>
            <person name="Van Damme P."/>
            <person name="Lasa M."/>
            <person name="Polevoda B."/>
            <person name="Gazquez C."/>
            <person name="Elosegui-Artola A."/>
            <person name="Kim D.S."/>
            <person name="De Juan-Pardo E."/>
            <person name="Demeyer K."/>
            <person name="Hole K."/>
            <person name="Larrea E."/>
            <person name="Timmerman E."/>
            <person name="Prieto J."/>
            <person name="Arnesen T."/>
            <person name="Sherman F."/>
            <person name="Gevaert K."/>
            <person name="Aldabe R."/>
        </authorList>
    </citation>
    <scope>ACETYLATION [LARGE SCALE ANALYSIS] AT ALA-2</scope>
    <scope>CLEAVAGE OF INITIATOR METHIONINE [LARGE SCALE ANALYSIS]</scope>
    <scope>IDENTIFICATION BY MASS SPECTROMETRY [LARGE SCALE ANALYSIS]</scope>
</reference>
<reference key="7">
    <citation type="journal article" date="2017" name="Cell">
        <title>Assembly and function of heterotypic ubiquitin chains in cell-cycle and protein quality control.</title>
        <authorList>
            <person name="Yau R.G."/>
            <person name="Doerner K."/>
            <person name="Castellanos E.R."/>
            <person name="Haakonsen D.L."/>
            <person name="Werner A."/>
            <person name="Wang N."/>
            <person name="Yang X.W."/>
            <person name="Martinez-Martin N."/>
            <person name="Matsumoto M.L."/>
            <person name="Dixit V.M."/>
            <person name="Rape M."/>
        </authorList>
    </citation>
    <scope>FUNCTION</scope>
    <scope>PATHWAY</scope>
</reference>
<reference key="8">
    <citation type="journal article" date="2014" name="Nature">
        <title>Molecular architecture and mechanism of the anaphase-promoting complex.</title>
        <authorList>
            <person name="Chang L."/>
            <person name="Zhang Z."/>
            <person name="Yang J."/>
            <person name="McLaughlin S.H."/>
            <person name="Barford D."/>
        </authorList>
    </citation>
    <scope>STRUCTURE BY ELECTRON MICROSCOPY (7.4 ANGSTROMS) OF THE APC/C</scope>
    <scope>SUBUNIT</scope>
</reference>
<reference evidence="9 10" key="9">
    <citation type="journal article" date="2015" name="Nature">
        <title>Atomic structure of the APC/C and its mechanism of protein ubiquitination.</title>
        <authorList>
            <person name="Chang L."/>
            <person name="Zhang Z."/>
            <person name="Yang J."/>
            <person name="McLaughlin S.H."/>
            <person name="Barford D."/>
        </authorList>
    </citation>
    <scope>STRUCTURE BY ELECTRON MICROSCOPY (3.60 ANGSTROMS) OF APC/C</scope>
    <scope>SUBUNIT</scope>
</reference>
<accession>Q96DE5</accession>
<gene>
    <name type="primary">ANAPC16</name>
    <name type="synonym">C10orf104</name>
    <name evidence="7" type="synonym">CENP-27</name>
</gene>
<dbReference type="EMBL" id="AL607035">
    <property type="status" value="NOT_ANNOTATED_CDS"/>
    <property type="molecule type" value="Genomic_DNA"/>
</dbReference>
<dbReference type="EMBL" id="BC009530">
    <property type="protein sequence ID" value="AAH09530.1"/>
    <property type="molecule type" value="mRNA"/>
</dbReference>
<dbReference type="CCDS" id="CCDS7314.1"/>
<dbReference type="RefSeq" id="NP_001229475.1">
    <property type="nucleotide sequence ID" value="NM_001242546.2"/>
</dbReference>
<dbReference type="RefSeq" id="NP_001229476.1">
    <property type="nucleotide sequence ID" value="NM_001242547.2"/>
</dbReference>
<dbReference type="RefSeq" id="NP_001353720.1">
    <property type="nucleotide sequence ID" value="NM_001366791.1"/>
</dbReference>
<dbReference type="RefSeq" id="NP_775744.1">
    <property type="nucleotide sequence ID" value="NM_173473.4"/>
</dbReference>
<dbReference type="RefSeq" id="XP_047280536.1">
    <property type="nucleotide sequence ID" value="XM_047424580.1"/>
</dbReference>
<dbReference type="RefSeq" id="XP_047280538.1">
    <property type="nucleotide sequence ID" value="XM_047424582.1"/>
</dbReference>
<dbReference type="RefSeq" id="XP_054220727.1">
    <property type="nucleotide sequence ID" value="XM_054364752.1"/>
</dbReference>
<dbReference type="RefSeq" id="XP_054220728.1">
    <property type="nucleotide sequence ID" value="XM_054364753.1"/>
</dbReference>
<dbReference type="PDB" id="4RG6">
    <property type="method" value="X-ray"/>
    <property type="resolution" value="3.30 A"/>
    <property type="chains" value="S=74-109"/>
</dbReference>
<dbReference type="PDB" id="4RG9">
    <property type="method" value="X-ray"/>
    <property type="resolution" value="3.25 A"/>
    <property type="chains" value="S=74-109"/>
</dbReference>
<dbReference type="PDB" id="4UI9">
    <property type="method" value="EM"/>
    <property type="resolution" value="3.60 A"/>
    <property type="chains" value="E=1-110"/>
</dbReference>
<dbReference type="PDB" id="5A31">
    <property type="method" value="EM"/>
    <property type="resolution" value="4.30 A"/>
    <property type="chains" value="E=1-110"/>
</dbReference>
<dbReference type="PDB" id="5G04">
    <property type="method" value="EM"/>
    <property type="resolution" value="4.00 A"/>
    <property type="chains" value="E=1-110"/>
</dbReference>
<dbReference type="PDB" id="5G05">
    <property type="method" value="EM"/>
    <property type="resolution" value="3.40 A"/>
    <property type="chains" value="E=1-110"/>
</dbReference>
<dbReference type="PDB" id="5KHR">
    <property type="method" value="EM"/>
    <property type="resolution" value="6.10 A"/>
    <property type="chains" value="E=1-110"/>
</dbReference>
<dbReference type="PDB" id="5KHU">
    <property type="method" value="EM"/>
    <property type="resolution" value="4.80 A"/>
    <property type="chains" value="E=1-110"/>
</dbReference>
<dbReference type="PDB" id="5L9T">
    <property type="method" value="EM"/>
    <property type="resolution" value="6.40 A"/>
    <property type="chains" value="E=1-110"/>
</dbReference>
<dbReference type="PDB" id="5L9U">
    <property type="method" value="EM"/>
    <property type="resolution" value="6.40 A"/>
    <property type="chains" value="E=1-110"/>
</dbReference>
<dbReference type="PDB" id="5LCW">
    <property type="method" value="EM"/>
    <property type="resolution" value="4.00 A"/>
    <property type="chains" value="E=1-110"/>
</dbReference>
<dbReference type="PDB" id="6Q6G">
    <property type="method" value="EM"/>
    <property type="resolution" value="3.20 A"/>
    <property type="chains" value="H=1-110"/>
</dbReference>
<dbReference type="PDB" id="6Q6H">
    <property type="method" value="EM"/>
    <property type="resolution" value="3.20 A"/>
    <property type="chains" value="H=1-110"/>
</dbReference>
<dbReference type="PDB" id="6TLJ">
    <property type="method" value="EM"/>
    <property type="resolution" value="3.80 A"/>
    <property type="chains" value="E=1-110"/>
</dbReference>
<dbReference type="PDB" id="6TM5">
    <property type="method" value="EM"/>
    <property type="resolution" value="3.90 A"/>
    <property type="chains" value="E=1-110"/>
</dbReference>
<dbReference type="PDB" id="6TNT">
    <property type="method" value="EM"/>
    <property type="resolution" value="3.78 A"/>
    <property type="chains" value="E=1-110"/>
</dbReference>
<dbReference type="PDB" id="8PKP">
    <property type="method" value="EM"/>
    <property type="resolution" value="3.20 A"/>
    <property type="chains" value="H=1-110"/>
</dbReference>
<dbReference type="PDB" id="8TAR">
    <property type="method" value="EM"/>
    <property type="resolution" value="4.00 A"/>
    <property type="chains" value="H=51-108"/>
</dbReference>
<dbReference type="PDB" id="8TAU">
    <property type="method" value="EM"/>
    <property type="resolution" value="3.50 A"/>
    <property type="chains" value="H=1-110"/>
</dbReference>
<dbReference type="PDB" id="9GAW">
    <property type="method" value="EM"/>
    <property type="resolution" value="2.90 A"/>
    <property type="chains" value="H=1-110"/>
</dbReference>
<dbReference type="PDBsum" id="4RG6"/>
<dbReference type="PDBsum" id="4RG9"/>
<dbReference type="PDBsum" id="4UI9"/>
<dbReference type="PDBsum" id="5A31"/>
<dbReference type="PDBsum" id="5G04"/>
<dbReference type="PDBsum" id="5G05"/>
<dbReference type="PDBsum" id="5KHR"/>
<dbReference type="PDBsum" id="5KHU"/>
<dbReference type="PDBsum" id="5L9T"/>
<dbReference type="PDBsum" id="5L9U"/>
<dbReference type="PDBsum" id="5LCW"/>
<dbReference type="PDBsum" id="6Q6G"/>
<dbReference type="PDBsum" id="6Q6H"/>
<dbReference type="PDBsum" id="6TLJ"/>
<dbReference type="PDBsum" id="6TM5"/>
<dbReference type="PDBsum" id="6TNT"/>
<dbReference type="PDBsum" id="8PKP"/>
<dbReference type="PDBsum" id="8TAR"/>
<dbReference type="PDBsum" id="8TAU"/>
<dbReference type="PDBsum" id="9GAW"/>
<dbReference type="EMDB" id="EMD-10516"/>
<dbReference type="EMDB" id="EMD-10518"/>
<dbReference type="EMDB" id="EMD-10536"/>
<dbReference type="EMDB" id="EMD-13931"/>
<dbReference type="EMDB" id="EMD-17751"/>
<dbReference type="EMDB" id="EMD-19711"/>
<dbReference type="EMDB" id="EMD-2924"/>
<dbReference type="EMDB" id="EMD-2925"/>
<dbReference type="EMDB" id="EMD-3385"/>
<dbReference type="EMDB" id="EMD-3386"/>
<dbReference type="EMDB" id="EMD-3387"/>
<dbReference type="EMDB" id="EMD-3388"/>
<dbReference type="EMDB" id="EMD-3389"/>
<dbReference type="EMDB" id="EMD-3390"/>
<dbReference type="EMDB" id="EMD-4037"/>
<dbReference type="EMDB" id="EMD-41140"/>
<dbReference type="EMDB" id="EMD-41142"/>
<dbReference type="EMDB" id="EMD-4465"/>
<dbReference type="EMDB" id="EMD-4466"/>
<dbReference type="EMDB" id="EMD-4467"/>
<dbReference type="EMDB" id="EMD-51190"/>
<dbReference type="SMR" id="Q96DE5"/>
<dbReference type="BioGRID" id="125643">
    <property type="interactions" value="95"/>
</dbReference>
<dbReference type="ComplexPortal" id="CPX-1860">
    <property type="entry name" value="Anaphase-promoting core complex"/>
</dbReference>
<dbReference type="CORUM" id="Q96DE5"/>
<dbReference type="DIP" id="DIP-56449N"/>
<dbReference type="FunCoup" id="Q96DE5">
    <property type="interactions" value="1628"/>
</dbReference>
<dbReference type="IntAct" id="Q96DE5">
    <property type="interactions" value="68"/>
</dbReference>
<dbReference type="MINT" id="Q96DE5"/>
<dbReference type="STRING" id="9606.ENSP00000477760"/>
<dbReference type="iPTMnet" id="Q96DE5"/>
<dbReference type="MetOSite" id="Q96DE5"/>
<dbReference type="PhosphoSitePlus" id="Q96DE5"/>
<dbReference type="SwissPalm" id="Q96DE5"/>
<dbReference type="BioMuta" id="ANAPC16"/>
<dbReference type="jPOST" id="Q96DE5"/>
<dbReference type="MassIVE" id="Q96DE5"/>
<dbReference type="PaxDb" id="9606-ENSP00000477760"/>
<dbReference type="PeptideAtlas" id="Q96DE5"/>
<dbReference type="ProteomicsDB" id="76284"/>
<dbReference type="Pumba" id="Q96DE5"/>
<dbReference type="Antibodypedia" id="48879">
    <property type="antibodies" value="12 antibodies from 7 providers"/>
</dbReference>
<dbReference type="DNASU" id="119504"/>
<dbReference type="Ensembl" id="ENST00000299381.5">
    <property type="protein sequence ID" value="ENSP00000299381.3"/>
    <property type="gene ID" value="ENSG00000166295.9"/>
</dbReference>
<dbReference type="Ensembl" id="ENST00000621663.4">
    <property type="protein sequence ID" value="ENSP00000477760.1"/>
    <property type="gene ID" value="ENSG00000166295.9"/>
</dbReference>
<dbReference type="GeneID" id="119504"/>
<dbReference type="KEGG" id="hsa:119504"/>
<dbReference type="MANE-Select" id="ENST00000299381.5">
    <property type="protein sequence ID" value="ENSP00000299381.3"/>
    <property type="RefSeq nucleotide sequence ID" value="NM_173473.4"/>
    <property type="RefSeq protein sequence ID" value="NP_775744.1"/>
</dbReference>
<dbReference type="UCSC" id="uc001jsv.4">
    <property type="organism name" value="human"/>
</dbReference>
<dbReference type="AGR" id="HGNC:26976"/>
<dbReference type="CTD" id="119504"/>
<dbReference type="DisGeNET" id="119504"/>
<dbReference type="GeneCards" id="ANAPC16"/>
<dbReference type="HGNC" id="HGNC:26976">
    <property type="gene designation" value="ANAPC16"/>
</dbReference>
<dbReference type="HPA" id="ENSG00000166295">
    <property type="expression patterns" value="Low tissue specificity"/>
</dbReference>
<dbReference type="MIM" id="613427">
    <property type="type" value="gene"/>
</dbReference>
<dbReference type="neXtProt" id="NX_Q96DE5"/>
<dbReference type="OpenTargets" id="ENSG00000166295"/>
<dbReference type="PharmGKB" id="PA165548225"/>
<dbReference type="VEuPathDB" id="HostDB:ENSG00000166295"/>
<dbReference type="eggNOG" id="ENOG502RZ50">
    <property type="taxonomic scope" value="Eukaryota"/>
</dbReference>
<dbReference type="GeneTree" id="ENSGT00390000018109"/>
<dbReference type="HOGENOM" id="CLU_153312_0_0_1"/>
<dbReference type="InParanoid" id="Q96DE5"/>
<dbReference type="OMA" id="GASRRCH"/>
<dbReference type="OrthoDB" id="6374621at2759"/>
<dbReference type="PAN-GO" id="Q96DE5">
    <property type="GO annotations" value="4 GO annotations based on evolutionary models"/>
</dbReference>
<dbReference type="PhylomeDB" id="Q96DE5"/>
<dbReference type="TreeFam" id="TF332754"/>
<dbReference type="PathwayCommons" id="Q96DE5"/>
<dbReference type="Reactome" id="R-HSA-141430">
    <property type="pathway name" value="Inactivation of APC/C via direct inhibition of the APC/C complex"/>
</dbReference>
<dbReference type="Reactome" id="R-HSA-174048">
    <property type="pathway name" value="APC/C:Cdc20 mediated degradation of Cyclin B"/>
</dbReference>
<dbReference type="Reactome" id="R-HSA-174084">
    <property type="pathway name" value="Autodegradation of Cdh1 by Cdh1:APC/C"/>
</dbReference>
<dbReference type="Reactome" id="R-HSA-174154">
    <property type="pathway name" value="APC/C:Cdc20 mediated degradation of Securin"/>
</dbReference>
<dbReference type="Reactome" id="R-HSA-174178">
    <property type="pathway name" value="APC/C:Cdh1 mediated degradation of Cdc20 and other APC/C:Cdh1 targeted proteins in late mitosis/early G1"/>
</dbReference>
<dbReference type="Reactome" id="R-HSA-174184">
    <property type="pathway name" value="Cdc20:Phospho-APC/C mediated degradation of Cyclin A"/>
</dbReference>
<dbReference type="Reactome" id="R-HSA-176407">
    <property type="pathway name" value="Conversion from APC/C:Cdc20 to APC/C:Cdh1 in late anaphase"/>
</dbReference>
<dbReference type="Reactome" id="R-HSA-176408">
    <property type="pathway name" value="Regulation of APC/C activators between G1/S and early anaphase"/>
</dbReference>
<dbReference type="Reactome" id="R-HSA-176409">
    <property type="pathway name" value="APC/C:Cdc20 mediated degradation of mitotic proteins"/>
</dbReference>
<dbReference type="Reactome" id="R-HSA-176412">
    <property type="pathway name" value="Phosphorylation of the APC/C"/>
</dbReference>
<dbReference type="Reactome" id="R-HSA-179409">
    <property type="pathway name" value="APC-Cdc20 mediated degradation of Nek2A"/>
</dbReference>
<dbReference type="Reactome" id="R-HSA-2467813">
    <property type="pathway name" value="Separation of Sister Chromatids"/>
</dbReference>
<dbReference type="Reactome" id="R-HSA-2559582">
    <property type="pathway name" value="Senescence-Associated Secretory Phenotype (SASP)"/>
</dbReference>
<dbReference type="Reactome" id="R-HSA-68867">
    <property type="pathway name" value="Assembly of the pre-replicative complex"/>
</dbReference>
<dbReference type="Reactome" id="R-HSA-69017">
    <property type="pathway name" value="CDK-mediated phosphorylation and removal of Cdc6"/>
</dbReference>
<dbReference type="Reactome" id="R-HSA-8853884">
    <property type="pathway name" value="Transcriptional Regulation by VENTX"/>
</dbReference>
<dbReference type="Reactome" id="R-HSA-9687136">
    <property type="pathway name" value="Aberrant regulation of mitotic exit in cancer due to RB1 defects"/>
</dbReference>
<dbReference type="SignaLink" id="Q96DE5"/>
<dbReference type="UniPathway" id="UPA00143"/>
<dbReference type="BioGRID-ORCS" id="119504">
    <property type="hits" value="14 hits in 1169 CRISPR screens"/>
</dbReference>
<dbReference type="ChiTaRS" id="ANAPC16">
    <property type="organism name" value="human"/>
</dbReference>
<dbReference type="EvolutionaryTrace" id="Q96DE5"/>
<dbReference type="GenomeRNAi" id="119504"/>
<dbReference type="Pharos" id="Q96DE5">
    <property type="development level" value="Tdark"/>
</dbReference>
<dbReference type="PRO" id="PR:Q96DE5"/>
<dbReference type="Proteomes" id="UP000005640">
    <property type="component" value="Chromosome 10"/>
</dbReference>
<dbReference type="RNAct" id="Q96DE5">
    <property type="molecule type" value="protein"/>
</dbReference>
<dbReference type="Bgee" id="ENSG00000166295">
    <property type="expression patterns" value="Expressed in parotid gland and 196 other cell types or tissues"/>
</dbReference>
<dbReference type="ExpressionAtlas" id="Q96DE5">
    <property type="expression patterns" value="baseline and differential"/>
</dbReference>
<dbReference type="GO" id="GO:0005680">
    <property type="term" value="C:anaphase-promoting complex"/>
    <property type="evidence" value="ECO:0000314"/>
    <property type="project" value="UniProtKB"/>
</dbReference>
<dbReference type="GO" id="GO:0005829">
    <property type="term" value="C:cytosol"/>
    <property type="evidence" value="ECO:0000314"/>
    <property type="project" value="HPA"/>
</dbReference>
<dbReference type="GO" id="GO:0000776">
    <property type="term" value="C:kinetochore"/>
    <property type="evidence" value="ECO:0000314"/>
    <property type="project" value="UniProtKB"/>
</dbReference>
<dbReference type="GO" id="GO:0005654">
    <property type="term" value="C:nucleoplasm"/>
    <property type="evidence" value="ECO:0000304"/>
    <property type="project" value="Reactome"/>
</dbReference>
<dbReference type="GO" id="GO:0031145">
    <property type="term" value="P:anaphase-promoting complex-dependent catabolic process"/>
    <property type="evidence" value="ECO:0000314"/>
    <property type="project" value="UniProtKB"/>
</dbReference>
<dbReference type="GO" id="GO:0051301">
    <property type="term" value="P:cell division"/>
    <property type="evidence" value="ECO:0007669"/>
    <property type="project" value="UniProtKB-KW"/>
</dbReference>
<dbReference type="GO" id="GO:0141198">
    <property type="term" value="P:protein branched polyubiquitination"/>
    <property type="evidence" value="ECO:0000314"/>
    <property type="project" value="UniProtKB"/>
</dbReference>
<dbReference type="GO" id="GO:0070979">
    <property type="term" value="P:protein K11-linked ubiquitination"/>
    <property type="evidence" value="ECO:0000314"/>
    <property type="project" value="UniProtKB"/>
</dbReference>
<dbReference type="GO" id="GO:0070936">
    <property type="term" value="P:protein K48-linked ubiquitination"/>
    <property type="evidence" value="ECO:0000314"/>
    <property type="project" value="UniProtKB"/>
</dbReference>
<dbReference type="GO" id="GO:0016567">
    <property type="term" value="P:protein ubiquitination"/>
    <property type="evidence" value="ECO:0000314"/>
    <property type="project" value="UniProtKB"/>
</dbReference>
<dbReference type="GO" id="GO:0051445">
    <property type="term" value="P:regulation of meiotic cell cycle"/>
    <property type="evidence" value="ECO:0000303"/>
    <property type="project" value="ComplexPortal"/>
</dbReference>
<dbReference type="GO" id="GO:0007346">
    <property type="term" value="P:regulation of mitotic cell cycle"/>
    <property type="evidence" value="ECO:0000303"/>
    <property type="project" value="ComplexPortal"/>
</dbReference>
<dbReference type="DisProt" id="DP01455"/>
<dbReference type="InterPro" id="IPR029641">
    <property type="entry name" value="APC16"/>
</dbReference>
<dbReference type="PANTHER" id="PTHR31564">
    <property type="entry name" value="ANAPHASE-PROMOTING COMPLEX SUBUNIT 16"/>
    <property type="match status" value="1"/>
</dbReference>
<dbReference type="PANTHER" id="PTHR31564:SF0">
    <property type="entry name" value="ANAPHASE-PROMOTING COMPLEX SUBUNIT 16"/>
    <property type="match status" value="1"/>
</dbReference>
<dbReference type="Pfam" id="PF17256">
    <property type="entry name" value="ANAPC16"/>
    <property type="match status" value="1"/>
</dbReference>
<proteinExistence type="evidence at protein level"/>
<comment type="function">
    <text evidence="2 6">Component of the anaphase promoting complex/cyclosome (APC/C), a cell cycle-regulated E3 ubiquitin ligase that controls progression through mitosis and the G1 phase of the cell cycle (PubMed:20360068). The APC/C complex acts by mediating ubiquitination and subsequent degradation of target proteins: it mainly mediates the formation of 'Lys-11'-linked polyubiquitin chains and, to a lower extent, the formation of 'Lys-48'- and 'Lys-63'-linked polyubiquitin chains (PubMed:20360068). The APC/C complex catalyzes assembly of branched 'Lys-11'-/'Lys-48'-linked branched ubiquitin chains on target proteins (PubMed:29033132).</text>
</comment>
<comment type="pathway">
    <text evidence="2 6">Protein modification; protein ubiquitination.</text>
</comment>
<comment type="subunit">
    <text evidence="2 4 5">The mammalian APC/C is composed at least of 14 distinct subunits ANAPC1, ANAPC2, CDC27/APC3, ANAPC4, ANAPC5, CDC16/APC6, ANAPC7, CDC23/APC8, ANAPC10, ANAPC11, CDC26/APC12, ANAPC13, ANAPC15 and ANAPC16 that assemble into a complex of at least 19 chains with a combined molecular mass of around 1.2 MDa; APC/C interacts with FZR1 and FBXO5 (PubMed:25043029, PubMed:26083744). ANAPC16 associates with the rest of the complex independently of ANAPC2 and ANAPC11.</text>
</comment>
<comment type="interaction">
    <interactant intactId="EBI-2555937">
        <id>Q96DE5</id>
    </interactant>
    <interactant intactId="EBI-7116203">
        <id>O75031</id>
        <label>HSF2BP</label>
    </interactant>
    <organismsDiffer>false</organismsDiffer>
    <experiments>3</experiments>
</comment>
<comment type="subcellular location">
    <subcellularLocation>
        <location evidence="2">Cytoplasm</location>
    </subcellularLocation>
    <subcellularLocation>
        <location evidence="2">Nucleus</location>
    </subcellularLocation>
    <subcellularLocation>
        <location evidence="3">Chromosome</location>
        <location evidence="3">Centromere</location>
        <location evidence="3">Kinetochore</location>
    </subcellularLocation>
</comment>
<comment type="similarity">
    <text evidence="8">Belongs to the APC16 family.</text>
</comment>
<sequence>MAASSSSSSAGGVSGSSVTGSGFSVSDLAPPRKALFTYPKGAGEMLEDGSERFLCESVFSYQVASTLKQVKHDQQVARMEKLAGLVEELEADEWRFKPIEQLLGFTPSSG</sequence>
<organism>
    <name type="scientific">Homo sapiens</name>
    <name type="common">Human</name>
    <dbReference type="NCBI Taxonomy" id="9606"/>
    <lineage>
        <taxon>Eukaryota</taxon>
        <taxon>Metazoa</taxon>
        <taxon>Chordata</taxon>
        <taxon>Craniata</taxon>
        <taxon>Vertebrata</taxon>
        <taxon>Euteleostomi</taxon>
        <taxon>Mammalia</taxon>
        <taxon>Eutheria</taxon>
        <taxon>Euarchontoglires</taxon>
        <taxon>Primates</taxon>
        <taxon>Haplorrhini</taxon>
        <taxon>Catarrhini</taxon>
        <taxon>Hominidae</taxon>
        <taxon>Homo</taxon>
    </lineage>
</organism>
<protein>
    <recommendedName>
        <fullName>Anaphase-promoting complex subunit 16</fullName>
        <shortName>APC16</shortName>
    </recommendedName>
    <alternativeName>
        <fullName>Cyclosome subunit 16</fullName>
    </alternativeName>
</protein>